<comment type="subcellular location">
    <subcellularLocation>
        <location evidence="2">Cell membrane</location>
        <topology evidence="2">Lipid-anchor</topology>
        <topology evidence="2">GPI-anchor</topology>
    </subcellularLocation>
</comment>
<comment type="PTM">
    <text evidence="2">The GPI-like-anchor contains a phosphoceramide group, rather than a phosphatidyl group.</text>
</comment>
<comment type="similarity">
    <text evidence="2">Belongs to the ponticulin family.</text>
</comment>
<comment type="caution">
    <text evidence="2">The Dictyosteliida are known to produce a glycosylsphingolipidinositol anchor (GPI-like-anchor). It has not been established whether Dictyosteliida make a glycosylphosphatidylinositol anchor (GPI-anchor) also, and whether their GPI-like-anchor modifications can be interconverted with GPI-anchor modifications in a resculpting process. It has not been established that the GPI-like-anchor modification in Dictyosteliida utilizes the same sequence motif.</text>
</comment>
<comment type="caution">
    <text evidence="2">Different sequence motifs predict both the N-glycosylation modification and the GPI- or GPI-like anchor modification for Asn-118. While it is chemically possible for both modifications to occur, it is not known whether it is enzymatically possible.</text>
</comment>
<keyword id="KW-1003">Cell membrane</keyword>
<keyword id="KW-0325">Glycoprotein</keyword>
<keyword id="KW-0336">GPI-anchor</keyword>
<keyword id="KW-0449">Lipoprotein</keyword>
<keyword id="KW-0472">Membrane</keyword>
<keyword id="KW-1185">Reference proteome</keyword>
<keyword id="KW-0732">Signal</keyword>
<feature type="signal peptide" evidence="1">
    <location>
        <begin position="1"/>
        <end position="20"/>
    </location>
</feature>
<feature type="chain" id="PRO_0000312134" description="Ponticulin-like protein C1">
    <location>
        <begin position="21"/>
        <end position="118"/>
    </location>
</feature>
<feature type="propeptide" id="PRO_0000312135" description="Removed in mature form" evidence="1">
    <location>
        <begin position="119"/>
        <end position="147"/>
    </location>
</feature>
<feature type="lipid moiety-binding region" description="GPI-like-anchor amidated asparagine" evidence="1">
    <location>
        <position position="118"/>
    </location>
</feature>
<feature type="glycosylation site" description="N-linked (GlcNAc...) asparagine" evidence="1">
    <location>
        <position position="118"/>
    </location>
</feature>
<gene>
    <name type="primary">ponC1</name>
    <name type="ORF">DDB_G0286717</name>
</gene>
<dbReference type="EMBL" id="AAFI02000089">
    <property type="protein sequence ID" value="EAL64114.1"/>
    <property type="molecule type" value="Genomic_DNA"/>
</dbReference>
<dbReference type="RefSeq" id="XP_637639.1">
    <property type="nucleotide sequence ID" value="XM_632547.1"/>
</dbReference>
<dbReference type="FunCoup" id="Q54LC2">
    <property type="interactions" value="697"/>
</dbReference>
<dbReference type="STRING" id="44689.Q54LC2"/>
<dbReference type="GlyCosmos" id="Q54LC2">
    <property type="glycosylation" value="1 site, No reported glycans"/>
</dbReference>
<dbReference type="GlyGen" id="Q54LC2">
    <property type="glycosylation" value="2 sites"/>
</dbReference>
<dbReference type="PaxDb" id="44689-DDB0232287"/>
<dbReference type="EnsemblProtists" id="EAL64114">
    <property type="protein sequence ID" value="EAL64114"/>
    <property type="gene ID" value="DDB_G0286717"/>
</dbReference>
<dbReference type="GeneID" id="8625780"/>
<dbReference type="KEGG" id="ddi:DDB_G0286717"/>
<dbReference type="dictyBase" id="DDB_G0286717">
    <property type="gene designation" value="ponC1"/>
</dbReference>
<dbReference type="VEuPathDB" id="AmoebaDB:DDB_G0286717"/>
<dbReference type="HOGENOM" id="CLU_1771535_0_0_1"/>
<dbReference type="InParanoid" id="Q54LC2"/>
<dbReference type="PhylomeDB" id="Q54LC2"/>
<dbReference type="PRO" id="PR:Q54LC2"/>
<dbReference type="Proteomes" id="UP000002195">
    <property type="component" value="Chromosome 4"/>
</dbReference>
<dbReference type="GO" id="GO:0042599">
    <property type="term" value="C:lamellar body"/>
    <property type="evidence" value="ECO:0007005"/>
    <property type="project" value="dictyBase"/>
</dbReference>
<dbReference type="GO" id="GO:0016020">
    <property type="term" value="C:membrane"/>
    <property type="evidence" value="ECO:0000250"/>
    <property type="project" value="dictyBase"/>
</dbReference>
<dbReference type="GO" id="GO:0005886">
    <property type="term" value="C:plasma membrane"/>
    <property type="evidence" value="ECO:0007669"/>
    <property type="project" value="UniProtKB-SubCell"/>
</dbReference>
<dbReference type="GO" id="GO:0098552">
    <property type="term" value="C:side of membrane"/>
    <property type="evidence" value="ECO:0007669"/>
    <property type="project" value="UniProtKB-KW"/>
</dbReference>
<dbReference type="GO" id="GO:0051015">
    <property type="term" value="F:actin filament binding"/>
    <property type="evidence" value="ECO:0000250"/>
    <property type="project" value="dictyBase"/>
</dbReference>
<reference key="1">
    <citation type="journal article" date="2005" name="Nature">
        <title>The genome of the social amoeba Dictyostelium discoideum.</title>
        <authorList>
            <person name="Eichinger L."/>
            <person name="Pachebat J.A."/>
            <person name="Gloeckner G."/>
            <person name="Rajandream M.A."/>
            <person name="Sucgang R."/>
            <person name="Berriman M."/>
            <person name="Song J."/>
            <person name="Olsen R."/>
            <person name="Szafranski K."/>
            <person name="Xu Q."/>
            <person name="Tunggal B."/>
            <person name="Kummerfeld S."/>
            <person name="Madera M."/>
            <person name="Konfortov B.A."/>
            <person name="Rivero F."/>
            <person name="Bankier A.T."/>
            <person name="Lehmann R."/>
            <person name="Hamlin N."/>
            <person name="Davies R."/>
            <person name="Gaudet P."/>
            <person name="Fey P."/>
            <person name="Pilcher K."/>
            <person name="Chen G."/>
            <person name="Saunders D."/>
            <person name="Sodergren E.J."/>
            <person name="Davis P."/>
            <person name="Kerhornou A."/>
            <person name="Nie X."/>
            <person name="Hall N."/>
            <person name="Anjard C."/>
            <person name="Hemphill L."/>
            <person name="Bason N."/>
            <person name="Farbrother P."/>
            <person name="Desany B."/>
            <person name="Just E."/>
            <person name="Morio T."/>
            <person name="Rost R."/>
            <person name="Churcher C.M."/>
            <person name="Cooper J."/>
            <person name="Haydock S."/>
            <person name="van Driessche N."/>
            <person name="Cronin A."/>
            <person name="Goodhead I."/>
            <person name="Muzny D.M."/>
            <person name="Mourier T."/>
            <person name="Pain A."/>
            <person name="Lu M."/>
            <person name="Harper D."/>
            <person name="Lindsay R."/>
            <person name="Hauser H."/>
            <person name="James K.D."/>
            <person name="Quiles M."/>
            <person name="Madan Babu M."/>
            <person name="Saito T."/>
            <person name="Buchrieser C."/>
            <person name="Wardroper A."/>
            <person name="Felder M."/>
            <person name="Thangavelu M."/>
            <person name="Johnson D."/>
            <person name="Knights A."/>
            <person name="Loulseged H."/>
            <person name="Mungall K.L."/>
            <person name="Oliver K."/>
            <person name="Price C."/>
            <person name="Quail M.A."/>
            <person name="Urushihara H."/>
            <person name="Hernandez J."/>
            <person name="Rabbinowitsch E."/>
            <person name="Steffen D."/>
            <person name="Sanders M."/>
            <person name="Ma J."/>
            <person name="Kohara Y."/>
            <person name="Sharp S."/>
            <person name="Simmonds M.N."/>
            <person name="Spiegler S."/>
            <person name="Tivey A."/>
            <person name="Sugano S."/>
            <person name="White B."/>
            <person name="Walker D."/>
            <person name="Woodward J.R."/>
            <person name="Winckler T."/>
            <person name="Tanaka Y."/>
            <person name="Shaulsky G."/>
            <person name="Schleicher M."/>
            <person name="Weinstock G.M."/>
            <person name="Rosenthal A."/>
            <person name="Cox E.C."/>
            <person name="Chisholm R.L."/>
            <person name="Gibbs R.A."/>
            <person name="Loomis W.F."/>
            <person name="Platzer M."/>
            <person name="Kay R.R."/>
            <person name="Williams J.G."/>
            <person name="Dear P.H."/>
            <person name="Noegel A.A."/>
            <person name="Barrell B.G."/>
            <person name="Kuspa A."/>
        </authorList>
    </citation>
    <scope>NUCLEOTIDE SEQUENCE [LARGE SCALE GENOMIC DNA]</scope>
    <source>
        <strain>AX4</strain>
    </source>
</reference>
<reference key="2">
    <citation type="journal article" date="2008" name="Langmuir">
        <title>Minimal F-actin cytoskeletal system for planar supported phospholipid bilayers.</title>
        <authorList>
            <person name="Barfoot R.J."/>
            <person name="Sheikh K.H."/>
            <person name="Johnson B.R."/>
            <person name="Colyer J."/>
            <person name="Miles R.E."/>
            <person name="Jeuken L.J."/>
            <person name="Bushby R.J."/>
            <person name="Evans S.D."/>
        </authorList>
    </citation>
    <scope>FUNCTION</scope>
</reference>
<sequence>MKFTKSLLLLIVAVFASSNAAETFSNFQVTNSDANSPCVTTPVELKVNTCQSACGSILNVLPVTGSTSKFTFNQFGAQDTKCAATPTSSNEFTCVDGKSKVAIGTTTYSVVCVPDKTNSSESDSSDSTRIGASFALAASVLLSMLAI</sequence>
<protein>
    <recommendedName>
        <fullName>Ponticulin-like protein C1</fullName>
    </recommendedName>
</protein>
<name>PONC1_DICDI</name>
<accession>Q54LC2</accession>
<evidence type="ECO:0000255" key="1"/>
<evidence type="ECO:0000305" key="2"/>
<organism>
    <name type="scientific">Dictyostelium discoideum</name>
    <name type="common">Social amoeba</name>
    <dbReference type="NCBI Taxonomy" id="44689"/>
    <lineage>
        <taxon>Eukaryota</taxon>
        <taxon>Amoebozoa</taxon>
        <taxon>Evosea</taxon>
        <taxon>Eumycetozoa</taxon>
        <taxon>Dictyostelia</taxon>
        <taxon>Dictyosteliales</taxon>
        <taxon>Dictyosteliaceae</taxon>
        <taxon>Dictyostelium</taxon>
    </lineage>
</organism>
<proteinExistence type="inferred from homology"/>